<name>RPOZ_FRATM</name>
<gene>
    <name evidence="1" type="primary">rpoZ</name>
    <name type="ordered locus">FTM_1381</name>
</gene>
<reference key="1">
    <citation type="journal article" date="2009" name="PLoS Pathog.">
        <title>Molecular evolutionary consequences of niche restriction in Francisella tularensis, a facultative intracellular pathogen.</title>
        <authorList>
            <person name="Larsson P."/>
            <person name="Elfsmark D."/>
            <person name="Svensson K."/>
            <person name="Wikstroem P."/>
            <person name="Forsman M."/>
            <person name="Brettin T."/>
            <person name="Keim P."/>
            <person name="Johansson A."/>
        </authorList>
    </citation>
    <scope>NUCLEOTIDE SEQUENCE [LARGE SCALE GENOMIC DNA]</scope>
    <source>
        <strain>FSC147</strain>
    </source>
</reference>
<organism>
    <name type="scientific">Francisella tularensis subsp. mediasiatica (strain FSC147)</name>
    <dbReference type="NCBI Taxonomy" id="441952"/>
    <lineage>
        <taxon>Bacteria</taxon>
        <taxon>Pseudomonadati</taxon>
        <taxon>Pseudomonadota</taxon>
        <taxon>Gammaproteobacteria</taxon>
        <taxon>Thiotrichales</taxon>
        <taxon>Francisellaceae</taxon>
        <taxon>Francisella</taxon>
    </lineage>
</organism>
<feature type="chain" id="PRO_1000121228" description="DNA-directed RNA polymerase subunit omega">
    <location>
        <begin position="1"/>
        <end position="72"/>
    </location>
</feature>
<protein>
    <recommendedName>
        <fullName evidence="1">DNA-directed RNA polymerase subunit omega</fullName>
        <shortName evidence="1">RNAP omega subunit</shortName>
        <ecNumber evidence="1">2.7.7.6</ecNumber>
    </recommendedName>
    <alternativeName>
        <fullName evidence="1">RNA polymerase omega subunit</fullName>
    </alternativeName>
    <alternativeName>
        <fullName evidence="1">Transcriptase subunit omega</fullName>
    </alternativeName>
</protein>
<keyword id="KW-0240">DNA-directed RNA polymerase</keyword>
<keyword id="KW-0548">Nucleotidyltransferase</keyword>
<keyword id="KW-0804">Transcription</keyword>
<keyword id="KW-0808">Transferase</keyword>
<accession>B2SDK3</accession>
<comment type="function">
    <text evidence="1">Promotes RNA polymerase assembly. Latches the N- and C-terminal regions of the beta' subunit thereby facilitating its interaction with the beta and alpha subunits.</text>
</comment>
<comment type="catalytic activity">
    <reaction evidence="1">
        <text>RNA(n) + a ribonucleoside 5'-triphosphate = RNA(n+1) + diphosphate</text>
        <dbReference type="Rhea" id="RHEA:21248"/>
        <dbReference type="Rhea" id="RHEA-COMP:14527"/>
        <dbReference type="Rhea" id="RHEA-COMP:17342"/>
        <dbReference type="ChEBI" id="CHEBI:33019"/>
        <dbReference type="ChEBI" id="CHEBI:61557"/>
        <dbReference type="ChEBI" id="CHEBI:140395"/>
        <dbReference type="EC" id="2.7.7.6"/>
    </reaction>
</comment>
<comment type="subunit">
    <text evidence="1">The RNAP catalytic core consists of 2 alpha, 1 beta, 1 beta' and 1 omega subunit. When a sigma factor is associated with the core the holoenzyme is formed, which can initiate transcription.</text>
</comment>
<comment type="similarity">
    <text evidence="1">Belongs to the RNA polymerase subunit omega family.</text>
</comment>
<evidence type="ECO:0000255" key="1">
    <source>
        <dbReference type="HAMAP-Rule" id="MF_00366"/>
    </source>
</evidence>
<dbReference type="EC" id="2.7.7.6" evidence="1"/>
<dbReference type="EMBL" id="CP000915">
    <property type="protein sequence ID" value="ACD31217.1"/>
    <property type="molecule type" value="Genomic_DNA"/>
</dbReference>
<dbReference type="SMR" id="B2SDK3"/>
<dbReference type="KEGG" id="ftm:FTM_1381"/>
<dbReference type="HOGENOM" id="CLU_125406_5_1_6"/>
<dbReference type="GO" id="GO:0000428">
    <property type="term" value="C:DNA-directed RNA polymerase complex"/>
    <property type="evidence" value="ECO:0007669"/>
    <property type="project" value="UniProtKB-KW"/>
</dbReference>
<dbReference type="GO" id="GO:0003677">
    <property type="term" value="F:DNA binding"/>
    <property type="evidence" value="ECO:0007669"/>
    <property type="project" value="UniProtKB-UniRule"/>
</dbReference>
<dbReference type="GO" id="GO:0003899">
    <property type="term" value="F:DNA-directed RNA polymerase activity"/>
    <property type="evidence" value="ECO:0007669"/>
    <property type="project" value="UniProtKB-UniRule"/>
</dbReference>
<dbReference type="GO" id="GO:0006351">
    <property type="term" value="P:DNA-templated transcription"/>
    <property type="evidence" value="ECO:0007669"/>
    <property type="project" value="UniProtKB-UniRule"/>
</dbReference>
<dbReference type="Gene3D" id="3.90.940.10">
    <property type="match status" value="1"/>
</dbReference>
<dbReference type="HAMAP" id="MF_00366">
    <property type="entry name" value="RNApol_bact_RpoZ"/>
    <property type="match status" value="1"/>
</dbReference>
<dbReference type="InterPro" id="IPR003716">
    <property type="entry name" value="DNA-dir_RNA_pol_omega"/>
</dbReference>
<dbReference type="InterPro" id="IPR006110">
    <property type="entry name" value="Pol_omega/Rpo6/RPB6"/>
</dbReference>
<dbReference type="InterPro" id="IPR036161">
    <property type="entry name" value="RPB6/omega-like_sf"/>
</dbReference>
<dbReference type="NCBIfam" id="TIGR00690">
    <property type="entry name" value="rpoZ"/>
    <property type="match status" value="1"/>
</dbReference>
<dbReference type="PANTHER" id="PTHR34476">
    <property type="entry name" value="DNA-DIRECTED RNA POLYMERASE SUBUNIT OMEGA"/>
    <property type="match status" value="1"/>
</dbReference>
<dbReference type="PANTHER" id="PTHR34476:SF1">
    <property type="entry name" value="DNA-DIRECTED RNA POLYMERASE SUBUNIT OMEGA"/>
    <property type="match status" value="1"/>
</dbReference>
<dbReference type="Pfam" id="PF01192">
    <property type="entry name" value="RNA_pol_Rpb6"/>
    <property type="match status" value="1"/>
</dbReference>
<dbReference type="SMART" id="SM01409">
    <property type="entry name" value="RNA_pol_Rpb6"/>
    <property type="match status" value="1"/>
</dbReference>
<dbReference type="SUPFAM" id="SSF63562">
    <property type="entry name" value="RPB6/omega subunit-like"/>
    <property type="match status" value="1"/>
</dbReference>
<proteinExistence type="inferred from homology"/>
<sequence>MARVTVEDCLDKVETRFDLVVLASMRANKILKNGYSESMENEKKEKATVVALREIAESEITPEQILRNEIEG</sequence>